<reference key="1">
    <citation type="journal article" date="2006" name="PLoS Genet.">
        <title>Secrets of soil survival revealed by the genome sequence of Arthrobacter aurescens TC1.</title>
        <authorList>
            <person name="Mongodin E.F."/>
            <person name="Shapir N."/>
            <person name="Daugherty S.C."/>
            <person name="DeBoy R.T."/>
            <person name="Emerson J.B."/>
            <person name="Shvartzbeyn A."/>
            <person name="Radune D."/>
            <person name="Vamathevan J."/>
            <person name="Riggs F."/>
            <person name="Grinberg V."/>
            <person name="Khouri H.M."/>
            <person name="Wackett L.P."/>
            <person name="Nelson K.E."/>
            <person name="Sadowsky M.J."/>
        </authorList>
    </citation>
    <scope>NUCLEOTIDE SEQUENCE [LARGE SCALE GENOMIC DNA]</scope>
    <source>
        <strain>TC1</strain>
    </source>
</reference>
<evidence type="ECO:0000255" key="1">
    <source>
        <dbReference type="HAMAP-Rule" id="MF_01385"/>
    </source>
</evidence>
<proteinExistence type="inferred from homology"/>
<feature type="chain" id="PRO_0000344072" description="Urease accessory protein UreF">
    <location>
        <begin position="1"/>
        <end position="223"/>
    </location>
</feature>
<gene>
    <name evidence="1" type="primary">ureF</name>
    <name type="ordered locus">AAur_0218</name>
</gene>
<comment type="function">
    <text evidence="1">Required for maturation of urease via the functional incorporation of the urease nickel metallocenter.</text>
</comment>
<comment type="subunit">
    <text evidence="1">UreD, UreF and UreG form a complex that acts as a GTP-hydrolysis-dependent molecular chaperone, activating the urease apoprotein by helping to assemble the nickel containing metallocenter of UreC. The UreE protein probably delivers the nickel.</text>
</comment>
<comment type="subcellular location">
    <subcellularLocation>
        <location evidence="1">Cytoplasm</location>
    </subcellularLocation>
</comment>
<comment type="similarity">
    <text evidence="1">Belongs to the UreF family.</text>
</comment>
<protein>
    <recommendedName>
        <fullName evidence="1">Urease accessory protein UreF</fullName>
    </recommendedName>
</protein>
<name>UREF_PAEAT</name>
<sequence>MSATYQLALQQLTDSALPTGAFAHSLGFESYIHRGLVRDESTFSTWLQAFVSQQLSYSDGLALRFLFEGVDVGLLDGVLSAQLLAREVREASLKMGGRLLEIGGEVFPSAELEAYRGLVRAGSASGHQPLAFGVIARSLGVPLEEALSAYLFATVTSLTQNAVRAIPLGQNAGQRVLRQAHDAVAAAIHVVAQLCWDDFGAVSPGLEISQMRHERQRARMFMS</sequence>
<organism>
    <name type="scientific">Paenarthrobacter aurescens (strain TC1)</name>
    <dbReference type="NCBI Taxonomy" id="290340"/>
    <lineage>
        <taxon>Bacteria</taxon>
        <taxon>Bacillati</taxon>
        <taxon>Actinomycetota</taxon>
        <taxon>Actinomycetes</taxon>
        <taxon>Micrococcales</taxon>
        <taxon>Micrococcaceae</taxon>
        <taxon>Paenarthrobacter</taxon>
    </lineage>
</organism>
<accession>A1R1C7</accession>
<dbReference type="EMBL" id="CP000474">
    <property type="protein sequence ID" value="ABM09149.1"/>
    <property type="molecule type" value="Genomic_DNA"/>
</dbReference>
<dbReference type="RefSeq" id="WP_011772987.1">
    <property type="nucleotide sequence ID" value="NC_008711.1"/>
</dbReference>
<dbReference type="SMR" id="A1R1C7"/>
<dbReference type="STRING" id="290340.AAur_0218"/>
<dbReference type="KEGG" id="aau:AAur_0218"/>
<dbReference type="eggNOG" id="COG0830">
    <property type="taxonomic scope" value="Bacteria"/>
</dbReference>
<dbReference type="HOGENOM" id="CLU_049215_4_2_11"/>
<dbReference type="OrthoDB" id="9798772at2"/>
<dbReference type="Proteomes" id="UP000000637">
    <property type="component" value="Chromosome"/>
</dbReference>
<dbReference type="GO" id="GO:0005737">
    <property type="term" value="C:cytoplasm"/>
    <property type="evidence" value="ECO:0007669"/>
    <property type="project" value="UniProtKB-SubCell"/>
</dbReference>
<dbReference type="GO" id="GO:0016151">
    <property type="term" value="F:nickel cation binding"/>
    <property type="evidence" value="ECO:0007669"/>
    <property type="project" value="UniProtKB-UniRule"/>
</dbReference>
<dbReference type="Gene3D" id="1.10.4190.10">
    <property type="entry name" value="Urease accessory protein UreF"/>
    <property type="match status" value="1"/>
</dbReference>
<dbReference type="HAMAP" id="MF_01385">
    <property type="entry name" value="UreF"/>
    <property type="match status" value="1"/>
</dbReference>
<dbReference type="InterPro" id="IPR002639">
    <property type="entry name" value="UreF"/>
</dbReference>
<dbReference type="InterPro" id="IPR038277">
    <property type="entry name" value="UreF_sf"/>
</dbReference>
<dbReference type="PANTHER" id="PTHR33620">
    <property type="entry name" value="UREASE ACCESSORY PROTEIN F"/>
    <property type="match status" value="1"/>
</dbReference>
<dbReference type="PANTHER" id="PTHR33620:SF1">
    <property type="entry name" value="UREASE ACCESSORY PROTEIN F"/>
    <property type="match status" value="1"/>
</dbReference>
<dbReference type="Pfam" id="PF01730">
    <property type="entry name" value="UreF"/>
    <property type="match status" value="1"/>
</dbReference>
<dbReference type="PIRSF" id="PIRSF009467">
    <property type="entry name" value="Ureas_acces_UreF"/>
    <property type="match status" value="1"/>
</dbReference>
<keyword id="KW-0143">Chaperone</keyword>
<keyword id="KW-0963">Cytoplasm</keyword>
<keyword id="KW-0996">Nickel insertion</keyword>